<feature type="chain" id="PRO_1000116496" description="Dihydroxy-acid dehydratase">
    <location>
        <begin position="1"/>
        <end position="552"/>
    </location>
</feature>
<feature type="active site" description="Proton acceptor" evidence="1">
    <location>
        <position position="468"/>
    </location>
</feature>
<feature type="binding site" evidence="1">
    <location>
        <position position="78"/>
    </location>
    <ligand>
        <name>Mg(2+)</name>
        <dbReference type="ChEBI" id="CHEBI:18420"/>
    </ligand>
</feature>
<feature type="binding site" evidence="1">
    <location>
        <position position="119"/>
    </location>
    <ligand>
        <name>[2Fe-2S] cluster</name>
        <dbReference type="ChEBI" id="CHEBI:190135"/>
    </ligand>
</feature>
<feature type="binding site" evidence="1">
    <location>
        <position position="120"/>
    </location>
    <ligand>
        <name>Mg(2+)</name>
        <dbReference type="ChEBI" id="CHEBI:18420"/>
    </ligand>
</feature>
<feature type="binding site" description="via carbamate group" evidence="1">
    <location>
        <position position="121"/>
    </location>
    <ligand>
        <name>Mg(2+)</name>
        <dbReference type="ChEBI" id="CHEBI:18420"/>
    </ligand>
</feature>
<feature type="binding site" evidence="1">
    <location>
        <position position="191"/>
    </location>
    <ligand>
        <name>[2Fe-2S] cluster</name>
        <dbReference type="ChEBI" id="CHEBI:190135"/>
    </ligand>
</feature>
<feature type="binding site" evidence="1">
    <location>
        <position position="442"/>
    </location>
    <ligand>
        <name>Mg(2+)</name>
        <dbReference type="ChEBI" id="CHEBI:18420"/>
    </ligand>
</feature>
<feature type="modified residue" description="N6-carboxylysine" evidence="1">
    <location>
        <position position="121"/>
    </location>
</feature>
<dbReference type="EC" id="4.2.1.9" evidence="1"/>
<dbReference type="EMBL" id="CP001393">
    <property type="protein sequence ID" value="ACM59789.1"/>
    <property type="molecule type" value="Genomic_DNA"/>
</dbReference>
<dbReference type="RefSeq" id="WP_015907235.1">
    <property type="nucleotide sequence ID" value="NC_012034.1"/>
</dbReference>
<dbReference type="SMR" id="B9MPM8"/>
<dbReference type="STRING" id="521460.Athe_0665"/>
<dbReference type="GeneID" id="31772020"/>
<dbReference type="KEGG" id="ate:Athe_0665"/>
<dbReference type="eggNOG" id="COG0129">
    <property type="taxonomic scope" value="Bacteria"/>
</dbReference>
<dbReference type="HOGENOM" id="CLU_014271_4_2_9"/>
<dbReference type="UniPathway" id="UPA00047">
    <property type="reaction ID" value="UER00057"/>
</dbReference>
<dbReference type="UniPathway" id="UPA00049">
    <property type="reaction ID" value="UER00061"/>
</dbReference>
<dbReference type="Proteomes" id="UP000007723">
    <property type="component" value="Chromosome"/>
</dbReference>
<dbReference type="GO" id="GO:0005829">
    <property type="term" value="C:cytosol"/>
    <property type="evidence" value="ECO:0007669"/>
    <property type="project" value="TreeGrafter"/>
</dbReference>
<dbReference type="GO" id="GO:0051537">
    <property type="term" value="F:2 iron, 2 sulfur cluster binding"/>
    <property type="evidence" value="ECO:0007669"/>
    <property type="project" value="UniProtKB-UniRule"/>
</dbReference>
<dbReference type="GO" id="GO:0004160">
    <property type="term" value="F:dihydroxy-acid dehydratase activity"/>
    <property type="evidence" value="ECO:0007669"/>
    <property type="project" value="UniProtKB-UniRule"/>
</dbReference>
<dbReference type="GO" id="GO:0000287">
    <property type="term" value="F:magnesium ion binding"/>
    <property type="evidence" value="ECO:0007669"/>
    <property type="project" value="UniProtKB-UniRule"/>
</dbReference>
<dbReference type="GO" id="GO:0009097">
    <property type="term" value="P:isoleucine biosynthetic process"/>
    <property type="evidence" value="ECO:0007669"/>
    <property type="project" value="UniProtKB-UniRule"/>
</dbReference>
<dbReference type="GO" id="GO:0009099">
    <property type="term" value="P:L-valine biosynthetic process"/>
    <property type="evidence" value="ECO:0007669"/>
    <property type="project" value="UniProtKB-UniRule"/>
</dbReference>
<dbReference type="FunFam" id="3.50.30.80:FF:000001">
    <property type="entry name" value="Dihydroxy-acid dehydratase"/>
    <property type="match status" value="1"/>
</dbReference>
<dbReference type="Gene3D" id="3.50.30.80">
    <property type="entry name" value="IlvD/EDD C-terminal domain-like"/>
    <property type="match status" value="1"/>
</dbReference>
<dbReference type="HAMAP" id="MF_00012">
    <property type="entry name" value="IlvD"/>
    <property type="match status" value="1"/>
</dbReference>
<dbReference type="InterPro" id="IPR042096">
    <property type="entry name" value="Dihydro-acid_dehy_C"/>
</dbReference>
<dbReference type="InterPro" id="IPR004404">
    <property type="entry name" value="DihydroxyA_deHydtase"/>
</dbReference>
<dbReference type="InterPro" id="IPR020558">
    <property type="entry name" value="DiOHA_6PGluconate_deHydtase_CS"/>
</dbReference>
<dbReference type="InterPro" id="IPR056740">
    <property type="entry name" value="ILV_EDD_C"/>
</dbReference>
<dbReference type="InterPro" id="IPR000581">
    <property type="entry name" value="ILV_EDD_N"/>
</dbReference>
<dbReference type="InterPro" id="IPR037237">
    <property type="entry name" value="IlvD/EDD_N"/>
</dbReference>
<dbReference type="NCBIfam" id="TIGR00110">
    <property type="entry name" value="ilvD"/>
    <property type="match status" value="1"/>
</dbReference>
<dbReference type="NCBIfam" id="NF002068">
    <property type="entry name" value="PRK00911.1"/>
    <property type="match status" value="1"/>
</dbReference>
<dbReference type="PANTHER" id="PTHR43661">
    <property type="entry name" value="D-XYLONATE DEHYDRATASE"/>
    <property type="match status" value="1"/>
</dbReference>
<dbReference type="PANTHER" id="PTHR43661:SF3">
    <property type="entry name" value="D-XYLONATE DEHYDRATASE YAGF-RELATED"/>
    <property type="match status" value="1"/>
</dbReference>
<dbReference type="Pfam" id="PF24877">
    <property type="entry name" value="ILV_EDD_C"/>
    <property type="match status" value="1"/>
</dbReference>
<dbReference type="Pfam" id="PF00920">
    <property type="entry name" value="ILVD_EDD_N"/>
    <property type="match status" value="1"/>
</dbReference>
<dbReference type="SUPFAM" id="SSF143975">
    <property type="entry name" value="IlvD/EDD N-terminal domain-like"/>
    <property type="match status" value="1"/>
</dbReference>
<dbReference type="SUPFAM" id="SSF52016">
    <property type="entry name" value="LeuD/IlvD-like"/>
    <property type="match status" value="1"/>
</dbReference>
<dbReference type="PROSITE" id="PS00886">
    <property type="entry name" value="ILVD_EDD_1"/>
    <property type="match status" value="1"/>
</dbReference>
<dbReference type="PROSITE" id="PS00887">
    <property type="entry name" value="ILVD_EDD_2"/>
    <property type="match status" value="1"/>
</dbReference>
<evidence type="ECO:0000255" key="1">
    <source>
        <dbReference type="HAMAP-Rule" id="MF_00012"/>
    </source>
</evidence>
<sequence length="552" mass="58914">MRSDTVKKGFEKAPQRSLFKAMGYTDEEIRRPLIAVVNSWNEVVPGHIHLDRIAEAVKAGIRLAGATPMEFNVIGVCDGIAMGHIGMKYSLITRELIADSIEAMVMAHQFDGMVLIPNCDKIVPGMLIAAARVNIPAILISGGPMLAGKIGDKVCDLNSVFEGVGAYSAGKISEEDLYALEENACPGCGSCSGMFTANTMNCLSEVLGLALPGNGTIPAVMAARIRLAKMAGMKIVELVEKDIKPSDILTVEAFENALAVDMALGGSTNTILHLPAIANEVGIKLNLDIINAISDRTPNLCKLSPAGQHHIEDLYFAGGVQAVMNELSKKGLLHLNLMTVTGKTVGENIKDANVKNYNVIRPIDNPYSETGGLVIVRGNLAPDGAVVKKSAVPPKLMKHRGPARVFESGEEVFEAILKGKIQKGDVIVIRYEGPKGGPGMREMLSPTSALAGVGLIEDVALITDGRFSGATRGACFGHVSPEAAERGPIAAVQDGDMISIDIENKTLTLEVPEEEIKRRLEILPPFEPKVKKGYLYRYSKLVRSASTGAILE</sequence>
<reference key="1">
    <citation type="submission" date="2009-01" db="EMBL/GenBank/DDBJ databases">
        <title>Complete sequence of chromosome of Caldicellulosiruptor becscii DSM 6725.</title>
        <authorList>
            <person name="Lucas S."/>
            <person name="Copeland A."/>
            <person name="Lapidus A."/>
            <person name="Glavina del Rio T."/>
            <person name="Tice H."/>
            <person name="Bruce D."/>
            <person name="Goodwin L."/>
            <person name="Pitluck S."/>
            <person name="Sims D."/>
            <person name="Meincke L."/>
            <person name="Brettin T."/>
            <person name="Detter J.C."/>
            <person name="Han C."/>
            <person name="Larimer F."/>
            <person name="Land M."/>
            <person name="Hauser L."/>
            <person name="Kyrpides N."/>
            <person name="Ovchinnikova G."/>
            <person name="Kataeva I."/>
            <person name="Adams M.W.W."/>
        </authorList>
    </citation>
    <scope>NUCLEOTIDE SEQUENCE [LARGE SCALE GENOMIC DNA]</scope>
    <source>
        <strain>ATCC BAA-1888 / DSM 6725 / KCTC 15123 / Z-1320</strain>
    </source>
</reference>
<keyword id="KW-0001">2Fe-2S</keyword>
<keyword id="KW-0028">Amino-acid biosynthesis</keyword>
<keyword id="KW-0100">Branched-chain amino acid biosynthesis</keyword>
<keyword id="KW-0408">Iron</keyword>
<keyword id="KW-0411">Iron-sulfur</keyword>
<keyword id="KW-0456">Lyase</keyword>
<keyword id="KW-0460">Magnesium</keyword>
<keyword id="KW-0479">Metal-binding</keyword>
<proteinExistence type="inferred from homology"/>
<gene>
    <name evidence="1" type="primary">ilvD</name>
    <name type="ordered locus">Athe_0665</name>
</gene>
<organism>
    <name type="scientific">Caldicellulosiruptor bescii (strain ATCC BAA-1888 / DSM 6725 / KCTC 15123 / Z-1320)</name>
    <name type="common">Anaerocellum thermophilum</name>
    <dbReference type="NCBI Taxonomy" id="521460"/>
    <lineage>
        <taxon>Bacteria</taxon>
        <taxon>Bacillati</taxon>
        <taxon>Bacillota</taxon>
        <taxon>Bacillota incertae sedis</taxon>
        <taxon>Caldicellulosiruptorales</taxon>
        <taxon>Caldicellulosiruptoraceae</taxon>
        <taxon>Caldicellulosiruptor</taxon>
    </lineage>
</organism>
<name>ILVD_CALBD</name>
<comment type="function">
    <text evidence="1">Functions in the biosynthesis of branched-chain amino acids. Catalyzes the dehydration of (2R,3R)-2,3-dihydroxy-3-methylpentanoate (2,3-dihydroxy-3-methylvalerate) into 2-oxo-3-methylpentanoate (2-oxo-3-methylvalerate) and of (2R)-2,3-dihydroxy-3-methylbutanoate (2,3-dihydroxyisovalerate) into 2-oxo-3-methylbutanoate (2-oxoisovalerate), the penultimate precursor to L-isoleucine and L-valine, respectively.</text>
</comment>
<comment type="catalytic activity">
    <reaction evidence="1">
        <text>(2R)-2,3-dihydroxy-3-methylbutanoate = 3-methyl-2-oxobutanoate + H2O</text>
        <dbReference type="Rhea" id="RHEA:24809"/>
        <dbReference type="ChEBI" id="CHEBI:11851"/>
        <dbReference type="ChEBI" id="CHEBI:15377"/>
        <dbReference type="ChEBI" id="CHEBI:49072"/>
        <dbReference type="EC" id="4.2.1.9"/>
    </reaction>
    <physiologicalReaction direction="left-to-right" evidence="1">
        <dbReference type="Rhea" id="RHEA:24810"/>
    </physiologicalReaction>
</comment>
<comment type="catalytic activity">
    <reaction evidence="1">
        <text>(2R,3R)-2,3-dihydroxy-3-methylpentanoate = (S)-3-methyl-2-oxopentanoate + H2O</text>
        <dbReference type="Rhea" id="RHEA:27694"/>
        <dbReference type="ChEBI" id="CHEBI:15377"/>
        <dbReference type="ChEBI" id="CHEBI:35146"/>
        <dbReference type="ChEBI" id="CHEBI:49258"/>
        <dbReference type="EC" id="4.2.1.9"/>
    </reaction>
    <physiologicalReaction direction="left-to-right" evidence="1">
        <dbReference type="Rhea" id="RHEA:27695"/>
    </physiologicalReaction>
</comment>
<comment type="cofactor">
    <cofactor evidence="1">
        <name>[2Fe-2S] cluster</name>
        <dbReference type="ChEBI" id="CHEBI:190135"/>
    </cofactor>
    <text evidence="1">Binds 1 [2Fe-2S] cluster per subunit. This cluster acts as a Lewis acid cofactor.</text>
</comment>
<comment type="cofactor">
    <cofactor evidence="1">
        <name>Mg(2+)</name>
        <dbReference type="ChEBI" id="CHEBI:18420"/>
    </cofactor>
</comment>
<comment type="pathway">
    <text evidence="1">Amino-acid biosynthesis; L-isoleucine biosynthesis; L-isoleucine from 2-oxobutanoate: step 3/4.</text>
</comment>
<comment type="pathway">
    <text evidence="1">Amino-acid biosynthesis; L-valine biosynthesis; L-valine from pyruvate: step 3/4.</text>
</comment>
<comment type="subunit">
    <text evidence="1">Homodimer.</text>
</comment>
<comment type="similarity">
    <text evidence="1">Belongs to the IlvD/Edd family.</text>
</comment>
<protein>
    <recommendedName>
        <fullName evidence="1">Dihydroxy-acid dehydratase</fullName>
        <shortName evidence="1">DAD</shortName>
        <ecNumber evidence="1">4.2.1.9</ecNumber>
    </recommendedName>
</protein>
<accession>B9MPM8</accession>